<accession>P80664</accession>
<name>LSHB_STRCA</name>
<keyword id="KW-0903">Direct protein sequencing</keyword>
<keyword id="KW-1015">Disulfide bond</keyword>
<keyword id="KW-0325">Glycoprotein</keyword>
<keyword id="KW-0372">Hormone</keyword>
<keyword id="KW-0964">Secreted</keyword>
<organism>
    <name type="scientific">Struthio camelus</name>
    <name type="common">Common ostrich</name>
    <dbReference type="NCBI Taxonomy" id="8801"/>
    <lineage>
        <taxon>Eukaryota</taxon>
        <taxon>Metazoa</taxon>
        <taxon>Chordata</taxon>
        <taxon>Craniata</taxon>
        <taxon>Vertebrata</taxon>
        <taxon>Euteleostomi</taxon>
        <taxon>Archelosauria</taxon>
        <taxon>Archosauria</taxon>
        <taxon>Dinosauria</taxon>
        <taxon>Saurischia</taxon>
        <taxon>Theropoda</taxon>
        <taxon>Coelurosauria</taxon>
        <taxon>Aves</taxon>
        <taxon>Palaeognathae</taxon>
        <taxon>Struthioniformes</taxon>
        <taxon>Struthionidae</taxon>
        <taxon>Struthio</taxon>
    </lineage>
</organism>
<feature type="chain" id="PRO_0000149042" description="Lutropin subunit beta">
    <location>
        <begin position="1"/>
        <end position="128"/>
    </location>
</feature>
<feature type="glycosylation site" description="N-linked (GlcNAc...) asparagine" evidence="2">
    <location>
        <position position="22"/>
    </location>
</feature>
<feature type="disulfide bond" evidence="1">
    <location>
        <begin position="18"/>
        <end position="66"/>
    </location>
</feature>
<feature type="disulfide bond" evidence="1">
    <location>
        <begin position="32"/>
        <end position="81"/>
    </location>
</feature>
<feature type="disulfide bond" evidence="1">
    <location>
        <begin position="35"/>
        <end position="119"/>
    </location>
</feature>
<feature type="disulfide bond" evidence="1">
    <location>
        <begin position="43"/>
        <end position="97"/>
    </location>
</feature>
<feature type="disulfide bond" evidence="1">
    <location>
        <begin position="47"/>
        <end position="99"/>
    </location>
</feature>
<feature type="disulfide bond" evidence="1">
    <location>
        <begin position="102"/>
        <end position="109"/>
    </location>
</feature>
<proteinExistence type="evidence at protein level"/>
<reference key="1">
    <citation type="journal article" date="1996" name="Eur. J. Biochem.">
        <title>Complete amino acid sequences of follitropin and lutropin in the ostrich, Struthio camelus.</title>
        <authorList>
            <person name="Koide Y."/>
            <person name="Papkoff H."/>
            <person name="Kawauchi H."/>
        </authorList>
    </citation>
    <scope>PROTEIN SEQUENCE</scope>
</reference>
<comment type="function">
    <text>Promotes spermatogenesis and ovulation by stimulating the testes and ovaries to synthesize steroids.</text>
</comment>
<comment type="subunit">
    <text>Heterodimer of a common alpha chain and a unique beta chain which confers biological specificity to thyrotropin, lutropin, follitropin and gonadotropin.</text>
</comment>
<comment type="subcellular location">
    <subcellularLocation>
        <location>Secreted</location>
    </subcellularLocation>
</comment>
<comment type="similarity">
    <text evidence="3">Belongs to the glycoprotein hormones subunit beta family.</text>
</comment>
<evidence type="ECO:0000250" key="1"/>
<evidence type="ECO:0000255" key="2"/>
<evidence type="ECO:0000305" key="3"/>
<sequence length="128" mass="12856">VPLGVPVALGVPPSRPPCRPVNVTVAAEKDECPQCLAVTTTACGGYCRTREPVYRSPLGGPAQQACGYGALRYERLALPGCAPGADPTVAVPVALSCRCARCPMATADCTVAGLGPAFCGAPAGFGPQ</sequence>
<gene>
    <name type="primary">LHB</name>
</gene>
<protein>
    <recommendedName>
        <fullName>Lutropin subunit beta</fullName>
        <shortName>Lutropin beta chain</shortName>
    </recommendedName>
    <alternativeName>
        <fullName>Luteinizing hormone subunit beta</fullName>
        <shortName>LH-B</shortName>
        <shortName>LSH-B</shortName>
        <shortName>LSH-beta</shortName>
    </alternativeName>
</protein>
<dbReference type="PIR" id="S74085">
    <property type="entry name" value="S74085"/>
</dbReference>
<dbReference type="SMR" id="P80664"/>
<dbReference type="GlyCosmos" id="P80664">
    <property type="glycosylation" value="1 site, No reported glycans"/>
</dbReference>
<dbReference type="GO" id="GO:0005737">
    <property type="term" value="C:cytoplasm"/>
    <property type="evidence" value="ECO:0007669"/>
    <property type="project" value="TreeGrafter"/>
</dbReference>
<dbReference type="GO" id="GO:0005615">
    <property type="term" value="C:extracellular space"/>
    <property type="evidence" value="ECO:0007669"/>
    <property type="project" value="TreeGrafter"/>
</dbReference>
<dbReference type="GO" id="GO:0005179">
    <property type="term" value="F:hormone activity"/>
    <property type="evidence" value="ECO:0007669"/>
    <property type="project" value="UniProtKB-KW"/>
</dbReference>
<dbReference type="GO" id="GO:0035938">
    <property type="term" value="P:estradiol secretion"/>
    <property type="evidence" value="ECO:0000315"/>
    <property type="project" value="AgBase"/>
</dbReference>
<dbReference type="GO" id="GO:0007186">
    <property type="term" value="P:G protein-coupled receptor signaling pathway"/>
    <property type="evidence" value="ECO:0007669"/>
    <property type="project" value="TreeGrafter"/>
</dbReference>
<dbReference type="CDD" id="cd00069">
    <property type="entry name" value="GHB_like"/>
    <property type="match status" value="1"/>
</dbReference>
<dbReference type="FunFam" id="2.10.90.10:FF:000007">
    <property type="entry name" value="Luteinizing hormone beta subunit"/>
    <property type="match status" value="1"/>
</dbReference>
<dbReference type="Gene3D" id="2.10.90.10">
    <property type="entry name" value="Cystine-knot cytokines"/>
    <property type="match status" value="1"/>
</dbReference>
<dbReference type="InterPro" id="IPR029034">
    <property type="entry name" value="Cystine-knot_cytokine"/>
</dbReference>
<dbReference type="InterPro" id="IPR006208">
    <property type="entry name" value="Glyco_hormone_CN"/>
</dbReference>
<dbReference type="InterPro" id="IPR001545">
    <property type="entry name" value="Gonadotropin_bsu"/>
</dbReference>
<dbReference type="InterPro" id="IPR018245">
    <property type="entry name" value="Gonadotropin_bsu_CS"/>
</dbReference>
<dbReference type="PANTHER" id="PTHR11515">
    <property type="entry name" value="GLYCOPROTEIN HORMONE BETA CHAIN"/>
    <property type="match status" value="1"/>
</dbReference>
<dbReference type="PANTHER" id="PTHR11515:SF11">
    <property type="entry name" value="LUTROPIN SUBUNIT BETA"/>
    <property type="match status" value="1"/>
</dbReference>
<dbReference type="Pfam" id="PF00007">
    <property type="entry name" value="Cys_knot"/>
    <property type="match status" value="1"/>
</dbReference>
<dbReference type="SMART" id="SM00068">
    <property type="entry name" value="GHB"/>
    <property type="match status" value="1"/>
</dbReference>
<dbReference type="SUPFAM" id="SSF57501">
    <property type="entry name" value="Cystine-knot cytokines"/>
    <property type="match status" value="1"/>
</dbReference>
<dbReference type="PROSITE" id="PS00261">
    <property type="entry name" value="GLYCO_HORMONE_BETA_1"/>
    <property type="match status" value="1"/>
</dbReference>
<dbReference type="PROSITE" id="PS00689">
    <property type="entry name" value="GLYCO_HORMONE_BETA_2"/>
    <property type="match status" value="1"/>
</dbReference>